<evidence type="ECO:0000250" key="1">
    <source>
        <dbReference type="UniProtKB" id="Q96SW2"/>
    </source>
</evidence>
<evidence type="ECO:0000250" key="2">
    <source>
        <dbReference type="UniProtKB" id="Q9VH36"/>
    </source>
</evidence>
<evidence type="ECO:0000255" key="3">
    <source>
        <dbReference type="PROSITE-ProRule" id="PRU01123"/>
    </source>
</evidence>
<evidence type="ECO:0000255" key="4">
    <source>
        <dbReference type="PROSITE-ProRule" id="PRU01124"/>
    </source>
</evidence>
<evidence type="ECO:0000256" key="5">
    <source>
        <dbReference type="SAM" id="MobiDB-lite"/>
    </source>
</evidence>
<evidence type="ECO:0000305" key="6"/>
<sequence length="586" mass="66746">MDDEETSEINSVQGRDEDVQLEDHSQAQGLQDRRVDAMEQAWNNAIQDELSPPPEEAFQDPLAIEGEGGNAPEAMVEDGLQDDTASEGSHPSSDMSLESPGSEDDSDLERLPRWMIPQNRLRSAVDMMVSQARNRDGGIAALLNRDNFLQRVRSMVFSQERRRSRTSEETSQEDVEQPEDPPPQQPPRPPIDIGFDTNLPAEHSYFGNHLSRVPGVDYLEVGSVHHMLIFLHQHILFPGEVLPFMIDGRMFDEDMPGLDGLIFGVGFPLMQPPEDNQLKLYGVTCQIYEKGESGRGLVFYKSRALQRIVINFDDIQGSPQYIARNPTSKCFSKVKILPEYFLPEPLQSVDMGSMARFRDIPSMRDKYRRFQLSTTNWPSDACQEYSFASIVERARQRLESQKIDTMPKCPIQLSFWLVRNLHLTEKMMRLTFLTDSVNTRLQLIKSTFTDESLFFCRYCNSSLAHCADLFAMSKHGVQTQYCNPDGYIHETNTVYRVMSHAIGYSGEPSTKFSWFPGYQWHIILCKFCAQHVGWEFKAVQPNLTPRVFFGLAGSSVRIGKASENTSFNGSPYVVRNMLRLISNEME</sequence>
<comment type="function">
    <text evidence="2">Substrate recognition component of a DCX (DDB1-CUL4-X-box) E3 protein ligase complex that mediates the ubiquitination and subsequent proteasomal degradation of target proteins. Has an essential role in mediating growth by negatively regulating insulin signaling. It also has a role in maintaining presynaptic function in the neuromuscular junction synapses of third-instar larvae.</text>
</comment>
<comment type="pathway">
    <text evidence="1">Protein modification; protein ubiquitination.</text>
</comment>
<comment type="subunit">
    <text evidence="1 2">Likely a component of a DCX (DDB1-CUL4-X-box) protein ligase complex (By similarity). May interact with pic/DDB1 (By similarity).</text>
</comment>
<comment type="subcellular location">
    <subcellularLocation>
        <location evidence="2">Nucleus</location>
    </subcellularLocation>
</comment>
<comment type="PTM">
    <text evidence="2">Ubiquitinated.</text>
</comment>
<comment type="similarity">
    <text evidence="6">Belongs to the CRBN family.</text>
</comment>
<keyword id="KW-0479">Metal-binding</keyword>
<keyword id="KW-0539">Nucleus</keyword>
<keyword id="KW-0832">Ubl conjugation</keyword>
<keyword id="KW-0833">Ubl conjugation pathway</keyword>
<keyword id="KW-0862">Zinc</keyword>
<name>CRBN_DROER</name>
<feature type="chain" id="PRO_0000393879" description="Protein cereblon">
    <location>
        <begin position="1"/>
        <end position="586"/>
    </location>
</feature>
<feature type="domain" description="Lon N-terminal" evidence="3">
    <location>
        <begin position="226"/>
        <end position="452"/>
    </location>
</feature>
<feature type="domain" description="CULT" evidence="4">
    <location>
        <begin position="451"/>
        <end position="560"/>
    </location>
</feature>
<feature type="region of interest" description="Disordered" evidence="5">
    <location>
        <begin position="1"/>
        <end position="114"/>
    </location>
</feature>
<feature type="region of interest" description="Disordered" evidence="5">
    <location>
        <begin position="158"/>
        <end position="194"/>
    </location>
</feature>
<feature type="compositionally biased region" description="Basic and acidic residues" evidence="5">
    <location>
        <begin position="14"/>
        <end position="37"/>
    </location>
</feature>
<feature type="compositionally biased region" description="Acidic residues" evidence="5">
    <location>
        <begin position="75"/>
        <end position="85"/>
    </location>
</feature>
<feature type="compositionally biased region" description="Polar residues" evidence="5">
    <location>
        <begin position="86"/>
        <end position="96"/>
    </location>
</feature>
<feature type="compositionally biased region" description="Basic and acidic residues" evidence="5">
    <location>
        <begin position="159"/>
        <end position="168"/>
    </location>
</feature>
<feature type="compositionally biased region" description="Acidic residues" evidence="5">
    <location>
        <begin position="170"/>
        <end position="179"/>
    </location>
</feature>
<feature type="compositionally biased region" description="Pro residues" evidence="5">
    <location>
        <begin position="180"/>
        <end position="190"/>
    </location>
</feature>
<feature type="binding site" evidence="4">
    <location>
        <position position="456"/>
    </location>
    <ligand>
        <name>Zn(2+)</name>
        <dbReference type="ChEBI" id="CHEBI:29105"/>
    </ligand>
</feature>
<feature type="binding site" evidence="4">
    <location>
        <position position="459"/>
    </location>
    <ligand>
        <name>Zn(2+)</name>
        <dbReference type="ChEBI" id="CHEBI:29105"/>
    </ligand>
</feature>
<feature type="binding site" evidence="4">
    <location>
        <position position="525"/>
    </location>
    <ligand>
        <name>Zn(2+)</name>
        <dbReference type="ChEBI" id="CHEBI:29105"/>
    </ligand>
</feature>
<feature type="binding site" evidence="4">
    <location>
        <position position="528"/>
    </location>
    <ligand>
        <name>Zn(2+)</name>
        <dbReference type="ChEBI" id="CHEBI:29105"/>
    </ligand>
</feature>
<accession>B3P4M4</accession>
<protein>
    <recommendedName>
        <fullName evidence="2">Protein cereblon</fullName>
    </recommendedName>
    <alternativeName>
        <fullName evidence="2">Protein ohgata</fullName>
    </alternativeName>
</protein>
<organism>
    <name type="scientific">Drosophila erecta</name>
    <name type="common">Fruit fly</name>
    <dbReference type="NCBI Taxonomy" id="7220"/>
    <lineage>
        <taxon>Eukaryota</taxon>
        <taxon>Metazoa</taxon>
        <taxon>Ecdysozoa</taxon>
        <taxon>Arthropoda</taxon>
        <taxon>Hexapoda</taxon>
        <taxon>Insecta</taxon>
        <taxon>Pterygota</taxon>
        <taxon>Neoptera</taxon>
        <taxon>Endopterygota</taxon>
        <taxon>Diptera</taxon>
        <taxon>Brachycera</taxon>
        <taxon>Muscomorpha</taxon>
        <taxon>Ephydroidea</taxon>
        <taxon>Drosophilidae</taxon>
        <taxon>Drosophila</taxon>
        <taxon>Sophophora</taxon>
    </lineage>
</organism>
<reference key="1">
    <citation type="journal article" date="2007" name="Nature">
        <title>Evolution of genes and genomes on the Drosophila phylogeny.</title>
        <authorList>
            <consortium name="Drosophila 12 genomes consortium"/>
        </authorList>
    </citation>
    <scope>NUCLEOTIDE SEQUENCE [LARGE SCALE GENOMIC DNA]</scope>
    <source>
        <strain>Tucson 14021-0224.01</strain>
    </source>
</reference>
<gene>
    <name evidence="2" type="primary">ohgt</name>
    <name evidence="2" type="synonym">crbn</name>
    <name type="ORF">GG17313</name>
</gene>
<dbReference type="EMBL" id="CH954181">
    <property type="protein sequence ID" value="EDV49677.1"/>
    <property type="molecule type" value="Genomic_DNA"/>
</dbReference>
<dbReference type="SMR" id="B3P4M4"/>
<dbReference type="EnsemblMetazoa" id="FBtr0137367">
    <property type="protein sequence ID" value="FBpp0135859"/>
    <property type="gene ID" value="FBgn0109540"/>
</dbReference>
<dbReference type="EnsemblMetazoa" id="XM_001980683.3">
    <property type="protein sequence ID" value="XP_001980719.1"/>
    <property type="gene ID" value="LOC6552043"/>
</dbReference>
<dbReference type="GeneID" id="6552043"/>
<dbReference type="KEGG" id="der:6552043"/>
<dbReference type="CTD" id="41230"/>
<dbReference type="eggNOG" id="KOG1400">
    <property type="taxonomic scope" value="Eukaryota"/>
</dbReference>
<dbReference type="HOGENOM" id="CLU_028769_0_0_1"/>
<dbReference type="OMA" id="SPQYIAR"/>
<dbReference type="OrthoDB" id="267517at2759"/>
<dbReference type="PhylomeDB" id="B3P4M4"/>
<dbReference type="UniPathway" id="UPA00143"/>
<dbReference type="Proteomes" id="UP000008711">
    <property type="component" value="Unassembled WGS sequence"/>
</dbReference>
<dbReference type="GO" id="GO:0005634">
    <property type="term" value="C:nucleus"/>
    <property type="evidence" value="ECO:0007669"/>
    <property type="project" value="UniProtKB-SubCell"/>
</dbReference>
<dbReference type="GO" id="GO:0046872">
    <property type="term" value="F:metal ion binding"/>
    <property type="evidence" value="ECO:0007669"/>
    <property type="project" value="UniProtKB-KW"/>
</dbReference>
<dbReference type="GO" id="GO:1900075">
    <property type="term" value="P:positive regulation of neuromuscular synaptic transmission"/>
    <property type="evidence" value="ECO:0007669"/>
    <property type="project" value="EnsemblMetazoa"/>
</dbReference>
<dbReference type="GO" id="GO:0030177">
    <property type="term" value="P:positive regulation of Wnt signaling pathway"/>
    <property type="evidence" value="ECO:0007669"/>
    <property type="project" value="EnsemblMetazoa"/>
</dbReference>
<dbReference type="GO" id="GO:0016567">
    <property type="term" value="P:protein ubiquitination"/>
    <property type="evidence" value="ECO:0007669"/>
    <property type="project" value="UniProtKB-UniPathway"/>
</dbReference>
<dbReference type="CDD" id="cd15777">
    <property type="entry name" value="CRBN_C_like"/>
    <property type="match status" value="1"/>
</dbReference>
<dbReference type="FunFam" id="2.170.150.20:FF:000005">
    <property type="entry name" value="Blast:Protein cereblon homolog"/>
    <property type="match status" value="1"/>
</dbReference>
<dbReference type="Gene3D" id="1.20.58.1480">
    <property type="match status" value="1"/>
</dbReference>
<dbReference type="Gene3D" id="2.170.150.20">
    <property type="entry name" value="Peptide methionine sulfoxide reductase"/>
    <property type="match status" value="1"/>
</dbReference>
<dbReference type="InterPro" id="IPR034750">
    <property type="entry name" value="CULT"/>
</dbReference>
<dbReference type="InterPro" id="IPR003111">
    <property type="entry name" value="Lon_prtase_N"/>
</dbReference>
<dbReference type="InterPro" id="IPR004910">
    <property type="entry name" value="Yippee/Mis18/Cereblon"/>
</dbReference>
<dbReference type="Pfam" id="PF03226">
    <property type="entry name" value="Yippee-Mis18"/>
    <property type="match status" value="1"/>
</dbReference>
<dbReference type="PROSITE" id="PS51788">
    <property type="entry name" value="CULT"/>
    <property type="match status" value="1"/>
</dbReference>
<dbReference type="PROSITE" id="PS51787">
    <property type="entry name" value="LON_N"/>
    <property type="match status" value="1"/>
</dbReference>
<proteinExistence type="inferred from homology"/>